<reference evidence="7" key="1">
    <citation type="journal article" date="2015" name="PLoS Negl. Trop. Dis.">
        <title>Deep Sequencing Analysis of the Ixodes ricinus Haemocytome.</title>
        <authorList>
            <person name="Kotsyfakis M."/>
            <person name="Kopacek P."/>
            <person name="Franta Z."/>
            <person name="Pedra J.H."/>
            <person name="Ribeiro J.M."/>
        </authorList>
    </citation>
    <scope>NUCLEOTIDE SEQUENCE [LARGE SCALE MRNA]</scope>
</reference>
<reference evidence="6" key="2">
    <citation type="journal article" date="2019" name="J. Biol. Chem.">
        <title>A knottin scaffold directs the CXC-chemokine-binding specificity of tick evasins.</title>
        <authorList>
            <person name="Lee A.W."/>
            <person name="Deruaz M."/>
            <person name="Lynch C."/>
            <person name="Davies G."/>
            <person name="Singh K."/>
            <person name="Alenazi Y."/>
            <person name="Eaton J.R.O."/>
            <person name="Kawamura A."/>
            <person name="Shaw J."/>
            <person name="Proudfoot A.E.I."/>
            <person name="Dias J.M."/>
            <person name="Bhattacharya S."/>
        </authorList>
    </citation>
    <scope>FUNCTION</scope>
</reference>
<sequence>MEVKIFAFLQIAVLIAFSLHLASAGSKELSGPESSENSIEAAFCDTNCTEGTDGVWSGCSAGCFCVHVGNSTVGRCMTFNGVD</sequence>
<organism evidence="7">
    <name type="scientific">Ixodes ricinus</name>
    <name type="common">Common tick</name>
    <name type="synonym">Acarus ricinus</name>
    <dbReference type="NCBI Taxonomy" id="34613"/>
    <lineage>
        <taxon>Eukaryota</taxon>
        <taxon>Metazoa</taxon>
        <taxon>Ecdysozoa</taxon>
        <taxon>Arthropoda</taxon>
        <taxon>Chelicerata</taxon>
        <taxon>Arachnida</taxon>
        <taxon>Acari</taxon>
        <taxon>Parasitiformes</taxon>
        <taxon>Ixodida</taxon>
        <taxon>Ixodoidea</taxon>
        <taxon>Ixodidae</taxon>
        <taxon>Ixodinae</taxon>
        <taxon>Ixodes</taxon>
    </lineage>
</organism>
<evidence type="ECO:0000250" key="1">
    <source>
        <dbReference type="UniProtKB" id="P0C8E8"/>
    </source>
</evidence>
<evidence type="ECO:0000255" key="2"/>
<evidence type="ECO:0000255" key="3">
    <source>
        <dbReference type="PROSITE-ProRule" id="PRU00498"/>
    </source>
</evidence>
<evidence type="ECO:0000269" key="4">
    <source>
    </source>
</evidence>
<evidence type="ECO:0000303" key="5">
    <source>
    </source>
</evidence>
<evidence type="ECO:0000305" key="6"/>
<evidence type="ECO:0000312" key="7">
    <source>
        <dbReference type="EMBL" id="JAC92450.1"/>
    </source>
</evidence>
<proteinExistence type="inferred from homology"/>
<dbReference type="EMBL" id="GBIH01002260">
    <property type="protein sequence ID" value="JAC92450.1"/>
    <property type="molecule type" value="mRNA"/>
</dbReference>
<dbReference type="SMR" id="A0A090XBH9"/>
<dbReference type="GO" id="GO:0005576">
    <property type="term" value="C:extracellular region"/>
    <property type="evidence" value="ECO:0007669"/>
    <property type="project" value="UniProtKB-SubCell"/>
</dbReference>
<dbReference type="GO" id="GO:0019958">
    <property type="term" value="F:C-X-C chemokine binding"/>
    <property type="evidence" value="ECO:0000314"/>
    <property type="project" value="UniProtKB"/>
</dbReference>
<comment type="function">
    <text evidence="4">Salivary chemokine-binding protein which binds to host chemokines CXCL1, CXCL2, CXCL3, CXCL5, CXCL6, CXCL10, CXCL11 and CXCL13.</text>
</comment>
<comment type="subcellular location">
    <subcellularLocation>
        <location evidence="6">Secreted</location>
    </subcellularLocation>
</comment>
<protein>
    <recommendedName>
        <fullName evidence="5">Evasin P1090</fullName>
    </recommendedName>
</protein>
<name>E1090_IXORI</name>
<feature type="signal peptide" evidence="2">
    <location>
        <begin position="1"/>
        <end position="24"/>
    </location>
</feature>
<feature type="chain" id="PRO_5001868366" description="Evasin P1090" evidence="2">
    <location>
        <begin position="25"/>
        <end position="83"/>
    </location>
</feature>
<feature type="glycosylation site" description="N-linked (GlcNAc...) asparagine" evidence="3">
    <location>
        <position position="47"/>
    </location>
</feature>
<feature type="glycosylation site" description="N-linked (GlcNAc...) asparagine" evidence="3">
    <location>
        <position position="70"/>
    </location>
</feature>
<feature type="disulfide bond" evidence="1">
    <location>
        <begin position="44"/>
        <end position="63"/>
    </location>
</feature>
<feature type="disulfide bond" evidence="1">
    <location>
        <begin position="48"/>
        <end position="65"/>
    </location>
</feature>
<feature type="disulfide bond" evidence="1">
    <location>
        <begin position="59"/>
        <end position="76"/>
    </location>
</feature>
<accession>A0A090XBH9</accession>
<keyword id="KW-1015">Disulfide bond</keyword>
<keyword id="KW-0325">Glycoprotein</keyword>
<keyword id="KW-0964">Secreted</keyword>
<keyword id="KW-0732">Signal</keyword>